<gene>
    <name evidence="1" type="primary">metK</name>
    <name type="ordered locus">SPP_0772</name>
</gene>
<protein>
    <recommendedName>
        <fullName evidence="1">S-adenosylmethionine synthase</fullName>
        <shortName evidence="1">AdoMet synthase</shortName>
        <ecNumber evidence="1">2.5.1.6</ecNumber>
    </recommendedName>
    <alternativeName>
        <fullName evidence="1">MAT</fullName>
    </alternativeName>
    <alternativeName>
        <fullName evidence="1">Methionine adenosyltransferase</fullName>
    </alternativeName>
</protein>
<keyword id="KW-0067">ATP-binding</keyword>
<keyword id="KW-0963">Cytoplasm</keyword>
<keyword id="KW-0460">Magnesium</keyword>
<keyword id="KW-0479">Metal-binding</keyword>
<keyword id="KW-0547">Nucleotide-binding</keyword>
<keyword id="KW-0554">One-carbon metabolism</keyword>
<keyword id="KW-0630">Potassium</keyword>
<keyword id="KW-0808">Transferase</keyword>
<dbReference type="EC" id="2.5.1.6" evidence="1"/>
<dbReference type="EMBL" id="CP000920">
    <property type="protein sequence ID" value="ACO21467.1"/>
    <property type="molecule type" value="Genomic_DNA"/>
</dbReference>
<dbReference type="RefSeq" id="WP_000003933.1">
    <property type="nucleotide sequence ID" value="NC_012467.1"/>
</dbReference>
<dbReference type="SMR" id="C1CJL0"/>
<dbReference type="GeneID" id="45653865"/>
<dbReference type="KEGG" id="spp:SPP_0772"/>
<dbReference type="HOGENOM" id="CLU_041802_1_1_9"/>
<dbReference type="UniPathway" id="UPA00315">
    <property type="reaction ID" value="UER00080"/>
</dbReference>
<dbReference type="GO" id="GO:0005737">
    <property type="term" value="C:cytoplasm"/>
    <property type="evidence" value="ECO:0007669"/>
    <property type="project" value="UniProtKB-SubCell"/>
</dbReference>
<dbReference type="GO" id="GO:0005524">
    <property type="term" value="F:ATP binding"/>
    <property type="evidence" value="ECO:0007669"/>
    <property type="project" value="UniProtKB-UniRule"/>
</dbReference>
<dbReference type="GO" id="GO:0000287">
    <property type="term" value="F:magnesium ion binding"/>
    <property type="evidence" value="ECO:0007669"/>
    <property type="project" value="UniProtKB-UniRule"/>
</dbReference>
<dbReference type="GO" id="GO:0004478">
    <property type="term" value="F:methionine adenosyltransferase activity"/>
    <property type="evidence" value="ECO:0007669"/>
    <property type="project" value="UniProtKB-UniRule"/>
</dbReference>
<dbReference type="GO" id="GO:0006730">
    <property type="term" value="P:one-carbon metabolic process"/>
    <property type="evidence" value="ECO:0007669"/>
    <property type="project" value="UniProtKB-KW"/>
</dbReference>
<dbReference type="GO" id="GO:0006556">
    <property type="term" value="P:S-adenosylmethionine biosynthetic process"/>
    <property type="evidence" value="ECO:0007669"/>
    <property type="project" value="UniProtKB-UniRule"/>
</dbReference>
<dbReference type="CDD" id="cd18079">
    <property type="entry name" value="S-AdoMet_synt"/>
    <property type="match status" value="1"/>
</dbReference>
<dbReference type="FunFam" id="3.30.300.10:FF:000003">
    <property type="entry name" value="S-adenosylmethionine synthase"/>
    <property type="match status" value="1"/>
</dbReference>
<dbReference type="Gene3D" id="3.30.300.10">
    <property type="match status" value="3"/>
</dbReference>
<dbReference type="HAMAP" id="MF_00086">
    <property type="entry name" value="S_AdoMet_synth1"/>
    <property type="match status" value="1"/>
</dbReference>
<dbReference type="InterPro" id="IPR022631">
    <property type="entry name" value="ADOMET_SYNTHASE_CS"/>
</dbReference>
<dbReference type="InterPro" id="IPR022630">
    <property type="entry name" value="S-AdoMet_synt_C"/>
</dbReference>
<dbReference type="InterPro" id="IPR022629">
    <property type="entry name" value="S-AdoMet_synt_central"/>
</dbReference>
<dbReference type="InterPro" id="IPR022628">
    <property type="entry name" value="S-AdoMet_synt_N"/>
</dbReference>
<dbReference type="InterPro" id="IPR002133">
    <property type="entry name" value="S-AdoMet_synthetase"/>
</dbReference>
<dbReference type="InterPro" id="IPR022636">
    <property type="entry name" value="S-AdoMet_synthetase_sfam"/>
</dbReference>
<dbReference type="NCBIfam" id="TIGR01034">
    <property type="entry name" value="metK"/>
    <property type="match status" value="1"/>
</dbReference>
<dbReference type="PANTHER" id="PTHR11964">
    <property type="entry name" value="S-ADENOSYLMETHIONINE SYNTHETASE"/>
    <property type="match status" value="1"/>
</dbReference>
<dbReference type="Pfam" id="PF02773">
    <property type="entry name" value="S-AdoMet_synt_C"/>
    <property type="match status" value="1"/>
</dbReference>
<dbReference type="Pfam" id="PF02772">
    <property type="entry name" value="S-AdoMet_synt_M"/>
    <property type="match status" value="1"/>
</dbReference>
<dbReference type="Pfam" id="PF00438">
    <property type="entry name" value="S-AdoMet_synt_N"/>
    <property type="match status" value="1"/>
</dbReference>
<dbReference type="PIRSF" id="PIRSF000497">
    <property type="entry name" value="MAT"/>
    <property type="match status" value="1"/>
</dbReference>
<dbReference type="SUPFAM" id="SSF55973">
    <property type="entry name" value="S-adenosylmethionine synthetase"/>
    <property type="match status" value="3"/>
</dbReference>
<dbReference type="PROSITE" id="PS00376">
    <property type="entry name" value="ADOMET_SYNTHASE_1"/>
    <property type="match status" value="1"/>
</dbReference>
<dbReference type="PROSITE" id="PS00377">
    <property type="entry name" value="ADOMET_SYNTHASE_2"/>
    <property type="match status" value="1"/>
</dbReference>
<evidence type="ECO:0000255" key="1">
    <source>
        <dbReference type="HAMAP-Rule" id="MF_00086"/>
    </source>
</evidence>
<proteinExistence type="inferred from homology"/>
<feature type="chain" id="PRO_1000196731" description="S-adenosylmethionine synthase">
    <location>
        <begin position="1"/>
        <end position="396"/>
    </location>
</feature>
<feature type="region of interest" description="Flexible loop" evidence="1">
    <location>
        <begin position="100"/>
        <end position="110"/>
    </location>
</feature>
<feature type="binding site" description="in other chain" evidence="1">
    <location>
        <position position="16"/>
    </location>
    <ligand>
        <name>ATP</name>
        <dbReference type="ChEBI" id="CHEBI:30616"/>
        <note>ligand shared between two neighboring subunits</note>
    </ligand>
</feature>
<feature type="binding site" evidence="1">
    <location>
        <position position="18"/>
    </location>
    <ligand>
        <name>Mg(2+)</name>
        <dbReference type="ChEBI" id="CHEBI:18420"/>
    </ligand>
</feature>
<feature type="binding site" evidence="1">
    <location>
        <position position="44"/>
    </location>
    <ligand>
        <name>K(+)</name>
        <dbReference type="ChEBI" id="CHEBI:29103"/>
    </ligand>
</feature>
<feature type="binding site" description="in other chain" evidence="1">
    <location>
        <position position="57"/>
    </location>
    <ligand>
        <name>L-methionine</name>
        <dbReference type="ChEBI" id="CHEBI:57844"/>
        <note>ligand shared between two neighboring subunits</note>
    </ligand>
</feature>
<feature type="binding site" description="in other chain" evidence="1">
    <location>
        <position position="100"/>
    </location>
    <ligand>
        <name>L-methionine</name>
        <dbReference type="ChEBI" id="CHEBI:57844"/>
        <note>ligand shared between two neighboring subunits</note>
    </ligand>
</feature>
<feature type="binding site" description="in other chain" evidence="1">
    <location>
        <begin position="175"/>
        <end position="177"/>
    </location>
    <ligand>
        <name>ATP</name>
        <dbReference type="ChEBI" id="CHEBI:30616"/>
        <note>ligand shared between two neighboring subunits</note>
    </ligand>
</feature>
<feature type="binding site" description="in other chain" evidence="1">
    <location>
        <begin position="242"/>
        <end position="243"/>
    </location>
    <ligand>
        <name>ATP</name>
        <dbReference type="ChEBI" id="CHEBI:30616"/>
        <note>ligand shared between two neighboring subunits</note>
    </ligand>
</feature>
<feature type="binding site" evidence="1">
    <location>
        <position position="251"/>
    </location>
    <ligand>
        <name>ATP</name>
        <dbReference type="ChEBI" id="CHEBI:30616"/>
        <note>ligand shared between two neighboring subunits</note>
    </ligand>
</feature>
<feature type="binding site" evidence="1">
    <location>
        <position position="251"/>
    </location>
    <ligand>
        <name>L-methionine</name>
        <dbReference type="ChEBI" id="CHEBI:57844"/>
        <note>ligand shared between two neighboring subunits</note>
    </ligand>
</feature>
<feature type="binding site" description="in other chain" evidence="1">
    <location>
        <begin position="257"/>
        <end position="258"/>
    </location>
    <ligand>
        <name>ATP</name>
        <dbReference type="ChEBI" id="CHEBI:30616"/>
        <note>ligand shared between two neighboring subunits</note>
    </ligand>
</feature>
<feature type="binding site" evidence="1">
    <location>
        <position position="274"/>
    </location>
    <ligand>
        <name>ATP</name>
        <dbReference type="ChEBI" id="CHEBI:30616"/>
        <note>ligand shared between two neighboring subunits</note>
    </ligand>
</feature>
<feature type="binding site" evidence="1">
    <location>
        <position position="278"/>
    </location>
    <ligand>
        <name>ATP</name>
        <dbReference type="ChEBI" id="CHEBI:30616"/>
        <note>ligand shared between two neighboring subunits</note>
    </ligand>
</feature>
<feature type="binding site" description="in other chain" evidence="1">
    <location>
        <position position="282"/>
    </location>
    <ligand>
        <name>L-methionine</name>
        <dbReference type="ChEBI" id="CHEBI:57844"/>
        <note>ligand shared between two neighboring subunits</note>
    </ligand>
</feature>
<sequence>MSERKLFTSESVSEGHPDKIADQISDAILDAILAKDPEAHVAAETAVYTGSVHVFGEISTNAYVDINRVVRDTIAEIGYTNTEYGFSAETVGVHPSLVEQSPDIAQGVNEALEVRGNADQDPLDLIGAGDQGLMFGFAVDETEELMPLPIALSHKLVRRLAELRKSGEISYLRPDAKSQVTVEYDENDRPVRVDTVVISTQHDPEATNEQIHQDVIDKVIKEVIPSSYLDDKAKFFINPTGRFVIGGPQGDSGLTGRKIIVDTYGGYSRHGGGAFSGKDATKVDRSASYAARYIAKNIVAAGLAKKAEVQLAYAIGVAQPVSVRIDTFGTGTVAESQLEKAARQIFDLRPAGIIQMLDLKRPIYRQTSAYGHMGRTDIDLPWERLDKVDALKEAVK</sequence>
<accession>C1CJL0</accession>
<reference key="1">
    <citation type="journal article" date="2010" name="Genome Biol.">
        <title>Structure and dynamics of the pan-genome of Streptococcus pneumoniae and closely related species.</title>
        <authorList>
            <person name="Donati C."/>
            <person name="Hiller N.L."/>
            <person name="Tettelin H."/>
            <person name="Muzzi A."/>
            <person name="Croucher N.J."/>
            <person name="Angiuoli S.V."/>
            <person name="Oggioni M."/>
            <person name="Dunning Hotopp J.C."/>
            <person name="Hu F.Z."/>
            <person name="Riley D.R."/>
            <person name="Covacci A."/>
            <person name="Mitchell T.J."/>
            <person name="Bentley S.D."/>
            <person name="Kilian M."/>
            <person name="Ehrlich G.D."/>
            <person name="Rappuoli R."/>
            <person name="Moxon E.R."/>
            <person name="Masignani V."/>
        </authorList>
    </citation>
    <scope>NUCLEOTIDE SEQUENCE [LARGE SCALE GENOMIC DNA]</scope>
    <source>
        <strain>P1031</strain>
    </source>
</reference>
<name>METK_STRZP</name>
<comment type="function">
    <text evidence="1">Catalyzes the formation of S-adenosylmethionine (AdoMet) from methionine and ATP. The overall synthetic reaction is composed of two sequential steps, AdoMet formation and the subsequent tripolyphosphate hydrolysis which occurs prior to release of AdoMet from the enzyme.</text>
</comment>
<comment type="catalytic activity">
    <reaction evidence="1">
        <text>L-methionine + ATP + H2O = S-adenosyl-L-methionine + phosphate + diphosphate</text>
        <dbReference type="Rhea" id="RHEA:21080"/>
        <dbReference type="ChEBI" id="CHEBI:15377"/>
        <dbReference type="ChEBI" id="CHEBI:30616"/>
        <dbReference type="ChEBI" id="CHEBI:33019"/>
        <dbReference type="ChEBI" id="CHEBI:43474"/>
        <dbReference type="ChEBI" id="CHEBI:57844"/>
        <dbReference type="ChEBI" id="CHEBI:59789"/>
        <dbReference type="EC" id="2.5.1.6"/>
    </reaction>
</comment>
<comment type="cofactor">
    <cofactor evidence="1">
        <name>Mg(2+)</name>
        <dbReference type="ChEBI" id="CHEBI:18420"/>
    </cofactor>
    <text evidence="1">Binds 2 divalent ions per subunit.</text>
</comment>
<comment type="cofactor">
    <cofactor evidence="1">
        <name>K(+)</name>
        <dbReference type="ChEBI" id="CHEBI:29103"/>
    </cofactor>
    <text evidence="1">Binds 1 potassium ion per subunit.</text>
</comment>
<comment type="pathway">
    <text evidence="1">Amino-acid biosynthesis; S-adenosyl-L-methionine biosynthesis; S-adenosyl-L-methionine from L-methionine: step 1/1.</text>
</comment>
<comment type="subunit">
    <text evidence="1">Homotetramer; dimer of dimers.</text>
</comment>
<comment type="subcellular location">
    <subcellularLocation>
        <location evidence="1">Cytoplasm</location>
    </subcellularLocation>
</comment>
<comment type="similarity">
    <text evidence="1">Belongs to the AdoMet synthase family.</text>
</comment>
<organism>
    <name type="scientific">Streptococcus pneumoniae (strain P1031)</name>
    <dbReference type="NCBI Taxonomy" id="488223"/>
    <lineage>
        <taxon>Bacteria</taxon>
        <taxon>Bacillati</taxon>
        <taxon>Bacillota</taxon>
        <taxon>Bacilli</taxon>
        <taxon>Lactobacillales</taxon>
        <taxon>Streptococcaceae</taxon>
        <taxon>Streptococcus</taxon>
    </lineage>
</organism>